<comment type="function">
    <text evidence="1">RNA chaperone that binds small regulatory RNA (sRNAs) and mRNAs to facilitate mRNA translational regulation in response to envelope stress, environmental stress and changes in metabolite concentrations. Also binds with high specificity to tRNAs.</text>
</comment>
<comment type="subunit">
    <text evidence="1">Homohexamer.</text>
</comment>
<comment type="similarity">
    <text evidence="1">Belongs to the Hfq family.</text>
</comment>
<accession>B7LC31</accession>
<dbReference type="EMBL" id="CU928145">
    <property type="protein sequence ID" value="CAV01644.1"/>
    <property type="molecule type" value="Genomic_DNA"/>
</dbReference>
<dbReference type="RefSeq" id="WP_001051883.1">
    <property type="nucleotide sequence ID" value="NZ_CP028304.1"/>
</dbReference>
<dbReference type="SMR" id="B7LC31"/>
<dbReference type="GeneID" id="93777649"/>
<dbReference type="KEGG" id="eck:EC55989_4727"/>
<dbReference type="HOGENOM" id="CLU_113688_2_1_6"/>
<dbReference type="Proteomes" id="UP000000746">
    <property type="component" value="Chromosome"/>
</dbReference>
<dbReference type="GO" id="GO:0005829">
    <property type="term" value="C:cytosol"/>
    <property type="evidence" value="ECO:0007669"/>
    <property type="project" value="TreeGrafter"/>
</dbReference>
<dbReference type="GO" id="GO:0003723">
    <property type="term" value="F:RNA binding"/>
    <property type="evidence" value="ECO:0007669"/>
    <property type="project" value="UniProtKB-UniRule"/>
</dbReference>
<dbReference type="GO" id="GO:0006355">
    <property type="term" value="P:regulation of DNA-templated transcription"/>
    <property type="evidence" value="ECO:0007669"/>
    <property type="project" value="InterPro"/>
</dbReference>
<dbReference type="GO" id="GO:0043487">
    <property type="term" value="P:regulation of RNA stability"/>
    <property type="evidence" value="ECO:0007669"/>
    <property type="project" value="TreeGrafter"/>
</dbReference>
<dbReference type="GO" id="GO:0045974">
    <property type="term" value="P:regulation of translation, ncRNA-mediated"/>
    <property type="evidence" value="ECO:0007669"/>
    <property type="project" value="TreeGrafter"/>
</dbReference>
<dbReference type="CDD" id="cd01716">
    <property type="entry name" value="Hfq"/>
    <property type="match status" value="1"/>
</dbReference>
<dbReference type="FunFam" id="2.30.30.100:FF:000001">
    <property type="entry name" value="RNA-binding protein Hfq"/>
    <property type="match status" value="1"/>
</dbReference>
<dbReference type="Gene3D" id="2.30.30.100">
    <property type="match status" value="1"/>
</dbReference>
<dbReference type="HAMAP" id="MF_00436">
    <property type="entry name" value="Hfq"/>
    <property type="match status" value="1"/>
</dbReference>
<dbReference type="InterPro" id="IPR005001">
    <property type="entry name" value="Hfq"/>
</dbReference>
<dbReference type="InterPro" id="IPR010920">
    <property type="entry name" value="LSM_dom_sf"/>
</dbReference>
<dbReference type="InterPro" id="IPR047575">
    <property type="entry name" value="Sm"/>
</dbReference>
<dbReference type="NCBIfam" id="TIGR02383">
    <property type="entry name" value="Hfq"/>
    <property type="match status" value="1"/>
</dbReference>
<dbReference type="NCBIfam" id="NF001602">
    <property type="entry name" value="PRK00395.1"/>
    <property type="match status" value="1"/>
</dbReference>
<dbReference type="PANTHER" id="PTHR34772">
    <property type="entry name" value="RNA-BINDING PROTEIN HFQ"/>
    <property type="match status" value="1"/>
</dbReference>
<dbReference type="PANTHER" id="PTHR34772:SF1">
    <property type="entry name" value="RNA-BINDING PROTEIN HFQ"/>
    <property type="match status" value="1"/>
</dbReference>
<dbReference type="Pfam" id="PF17209">
    <property type="entry name" value="Hfq"/>
    <property type="match status" value="1"/>
</dbReference>
<dbReference type="SUPFAM" id="SSF50182">
    <property type="entry name" value="Sm-like ribonucleoproteins"/>
    <property type="match status" value="1"/>
</dbReference>
<dbReference type="PROSITE" id="PS52002">
    <property type="entry name" value="SM"/>
    <property type="match status" value="1"/>
</dbReference>
<gene>
    <name evidence="1" type="primary">hfq</name>
    <name type="ordered locus">EC55989_4727</name>
</gene>
<sequence>MAKGQSLQDPFLNALRRERVPVSIYLVNGIKLQGQIESFDQFVILLKNTVSQMVYKHAISTVVPSRPVSHHSNNAGGGTSSNYHHGSSAQNTSAQQDSEETE</sequence>
<evidence type="ECO:0000255" key="1">
    <source>
        <dbReference type="HAMAP-Rule" id="MF_00436"/>
    </source>
</evidence>
<evidence type="ECO:0000255" key="2">
    <source>
        <dbReference type="PROSITE-ProRule" id="PRU01346"/>
    </source>
</evidence>
<evidence type="ECO:0000256" key="3">
    <source>
        <dbReference type="SAM" id="MobiDB-lite"/>
    </source>
</evidence>
<feature type="chain" id="PRO_1000135032" description="RNA-binding protein Hfq">
    <location>
        <begin position="1"/>
        <end position="102"/>
    </location>
</feature>
<feature type="domain" description="Sm" evidence="2">
    <location>
        <begin position="9"/>
        <end position="68"/>
    </location>
</feature>
<feature type="region of interest" description="Disordered" evidence="3">
    <location>
        <begin position="63"/>
        <end position="102"/>
    </location>
</feature>
<feature type="compositionally biased region" description="Polar residues" evidence="3">
    <location>
        <begin position="70"/>
        <end position="96"/>
    </location>
</feature>
<keyword id="KW-1185">Reference proteome</keyword>
<keyword id="KW-0694">RNA-binding</keyword>
<keyword id="KW-0346">Stress response</keyword>
<protein>
    <recommendedName>
        <fullName evidence="1">RNA-binding protein Hfq</fullName>
    </recommendedName>
</protein>
<proteinExistence type="inferred from homology"/>
<organism>
    <name type="scientific">Escherichia coli (strain 55989 / EAEC)</name>
    <dbReference type="NCBI Taxonomy" id="585055"/>
    <lineage>
        <taxon>Bacteria</taxon>
        <taxon>Pseudomonadati</taxon>
        <taxon>Pseudomonadota</taxon>
        <taxon>Gammaproteobacteria</taxon>
        <taxon>Enterobacterales</taxon>
        <taxon>Enterobacteriaceae</taxon>
        <taxon>Escherichia</taxon>
    </lineage>
</organism>
<name>HFQ_ECO55</name>
<reference key="1">
    <citation type="journal article" date="2009" name="PLoS Genet.">
        <title>Organised genome dynamics in the Escherichia coli species results in highly diverse adaptive paths.</title>
        <authorList>
            <person name="Touchon M."/>
            <person name="Hoede C."/>
            <person name="Tenaillon O."/>
            <person name="Barbe V."/>
            <person name="Baeriswyl S."/>
            <person name="Bidet P."/>
            <person name="Bingen E."/>
            <person name="Bonacorsi S."/>
            <person name="Bouchier C."/>
            <person name="Bouvet O."/>
            <person name="Calteau A."/>
            <person name="Chiapello H."/>
            <person name="Clermont O."/>
            <person name="Cruveiller S."/>
            <person name="Danchin A."/>
            <person name="Diard M."/>
            <person name="Dossat C."/>
            <person name="Karoui M.E."/>
            <person name="Frapy E."/>
            <person name="Garry L."/>
            <person name="Ghigo J.M."/>
            <person name="Gilles A.M."/>
            <person name="Johnson J."/>
            <person name="Le Bouguenec C."/>
            <person name="Lescat M."/>
            <person name="Mangenot S."/>
            <person name="Martinez-Jehanne V."/>
            <person name="Matic I."/>
            <person name="Nassif X."/>
            <person name="Oztas S."/>
            <person name="Petit M.A."/>
            <person name="Pichon C."/>
            <person name="Rouy Z."/>
            <person name="Ruf C.S."/>
            <person name="Schneider D."/>
            <person name="Tourret J."/>
            <person name="Vacherie B."/>
            <person name="Vallenet D."/>
            <person name="Medigue C."/>
            <person name="Rocha E.P.C."/>
            <person name="Denamur E."/>
        </authorList>
    </citation>
    <scope>NUCLEOTIDE SEQUENCE [LARGE SCALE GENOMIC DNA]</scope>
    <source>
        <strain>55989 / EAEC</strain>
    </source>
</reference>